<reference key="1">
    <citation type="journal article" date="2002" name="Genome Res.">
        <title>The genome of Methanosarcina acetivorans reveals extensive metabolic and physiological diversity.</title>
        <authorList>
            <person name="Galagan J.E."/>
            <person name="Nusbaum C."/>
            <person name="Roy A."/>
            <person name="Endrizzi M.G."/>
            <person name="Macdonald P."/>
            <person name="FitzHugh W."/>
            <person name="Calvo S."/>
            <person name="Engels R."/>
            <person name="Smirnov S."/>
            <person name="Atnoor D."/>
            <person name="Brown A."/>
            <person name="Allen N."/>
            <person name="Naylor J."/>
            <person name="Stange-Thomann N."/>
            <person name="DeArellano K."/>
            <person name="Johnson R."/>
            <person name="Linton L."/>
            <person name="McEwan P."/>
            <person name="McKernan K."/>
            <person name="Talamas J."/>
            <person name="Tirrell A."/>
            <person name="Ye W."/>
            <person name="Zimmer A."/>
            <person name="Barber R.D."/>
            <person name="Cann I."/>
            <person name="Graham D.E."/>
            <person name="Grahame D.A."/>
            <person name="Guss A.M."/>
            <person name="Hedderich R."/>
            <person name="Ingram-Smith C."/>
            <person name="Kuettner H.C."/>
            <person name="Krzycki J.A."/>
            <person name="Leigh J.A."/>
            <person name="Li W."/>
            <person name="Liu J."/>
            <person name="Mukhopadhyay B."/>
            <person name="Reeve J.N."/>
            <person name="Smith K."/>
            <person name="Springer T.A."/>
            <person name="Umayam L.A."/>
            <person name="White O."/>
            <person name="White R.H."/>
            <person name="de Macario E.C."/>
            <person name="Ferry J.G."/>
            <person name="Jarrell K.F."/>
            <person name="Jing H."/>
            <person name="Macario A.J.L."/>
            <person name="Paulsen I.T."/>
            <person name="Pritchett M."/>
            <person name="Sowers K.R."/>
            <person name="Swanson R.V."/>
            <person name="Zinder S.H."/>
            <person name="Lander E."/>
            <person name="Metcalf W.W."/>
            <person name="Birren B."/>
        </authorList>
    </citation>
    <scope>NUCLEOTIDE SEQUENCE [LARGE SCALE GENOMIC DNA]</scope>
    <source>
        <strain>ATCC 35395 / DSM 2834 / JCM 12185 / C2A</strain>
    </source>
</reference>
<keyword id="KW-1185">Reference proteome</keyword>
<keyword id="KW-0687">Ribonucleoprotein</keyword>
<keyword id="KW-0689">Ribosomal protein</keyword>
<keyword id="KW-0694">RNA-binding</keyword>
<keyword id="KW-0699">rRNA-binding</keyword>
<dbReference type="EMBL" id="AE010299">
    <property type="protein sequence ID" value="AAM04519.1"/>
    <property type="molecule type" value="Genomic_DNA"/>
</dbReference>
<dbReference type="RefSeq" id="WP_011021123.1">
    <property type="nucleotide sequence ID" value="NC_003552.1"/>
</dbReference>
<dbReference type="SMR" id="Q8TRS5"/>
<dbReference type="FunCoup" id="Q8TRS5">
    <property type="interactions" value="148"/>
</dbReference>
<dbReference type="STRING" id="188937.MA_1094"/>
<dbReference type="EnsemblBacteria" id="AAM04519">
    <property type="protein sequence ID" value="AAM04519"/>
    <property type="gene ID" value="MA_1094"/>
</dbReference>
<dbReference type="GeneID" id="1472984"/>
<dbReference type="KEGG" id="mac:MA_1094"/>
<dbReference type="HOGENOM" id="CLU_109163_0_0_2"/>
<dbReference type="InParanoid" id="Q8TRS5"/>
<dbReference type="OrthoDB" id="9418at2157"/>
<dbReference type="PhylomeDB" id="Q8TRS5"/>
<dbReference type="Proteomes" id="UP000002487">
    <property type="component" value="Chromosome"/>
</dbReference>
<dbReference type="GO" id="GO:0022625">
    <property type="term" value="C:cytosolic large ribosomal subunit"/>
    <property type="evidence" value="ECO:0000318"/>
    <property type="project" value="GO_Central"/>
</dbReference>
<dbReference type="GO" id="GO:0019843">
    <property type="term" value="F:rRNA binding"/>
    <property type="evidence" value="ECO:0007669"/>
    <property type="project" value="UniProtKB-UniRule"/>
</dbReference>
<dbReference type="GO" id="GO:0003735">
    <property type="term" value="F:structural constituent of ribosome"/>
    <property type="evidence" value="ECO:0000318"/>
    <property type="project" value="GO_Central"/>
</dbReference>
<dbReference type="GO" id="GO:0006412">
    <property type="term" value="P:translation"/>
    <property type="evidence" value="ECO:0007669"/>
    <property type="project" value="UniProtKB-UniRule"/>
</dbReference>
<dbReference type="FunFam" id="3.100.10.10:FF:000021">
    <property type="entry name" value="50S ribosomal protein L15"/>
    <property type="match status" value="1"/>
</dbReference>
<dbReference type="FunFam" id="4.10.990.10:FF:000001">
    <property type="entry name" value="50S ribosomal protein L15"/>
    <property type="match status" value="1"/>
</dbReference>
<dbReference type="Gene3D" id="3.100.10.10">
    <property type="match status" value="1"/>
</dbReference>
<dbReference type="Gene3D" id="4.10.990.10">
    <property type="match status" value="1"/>
</dbReference>
<dbReference type="HAMAP" id="MF_01341">
    <property type="entry name" value="Ribosomal_uL15"/>
    <property type="match status" value="1"/>
</dbReference>
<dbReference type="InterPro" id="IPR027386">
    <property type="entry name" value="Rbsml_uL15_N"/>
</dbReference>
<dbReference type="InterPro" id="IPR030878">
    <property type="entry name" value="Ribosomal_uL15"/>
</dbReference>
<dbReference type="InterPro" id="IPR021131">
    <property type="entry name" value="Ribosomal_uL15/eL18"/>
</dbReference>
<dbReference type="InterPro" id="IPR036227">
    <property type="entry name" value="Ribosomal_uL15/eL18_sf"/>
</dbReference>
<dbReference type="InterPro" id="IPR001196">
    <property type="entry name" value="Ribosomal_uL15_CS"/>
</dbReference>
<dbReference type="PANTHER" id="PTHR11721">
    <property type="entry name" value="60S RIBOSOMAL PROTEIN L27A"/>
    <property type="match status" value="1"/>
</dbReference>
<dbReference type="PANTHER" id="PTHR11721:SF3">
    <property type="entry name" value="LARGE RIBOSOMAL SUBUNIT PROTEIN UL15"/>
    <property type="match status" value="1"/>
</dbReference>
<dbReference type="Pfam" id="PF00828">
    <property type="entry name" value="Ribosomal_L27A"/>
    <property type="match status" value="1"/>
</dbReference>
<dbReference type="SUPFAM" id="SSF52080">
    <property type="entry name" value="Ribosomal proteins L15p and L18e"/>
    <property type="match status" value="1"/>
</dbReference>
<dbReference type="PROSITE" id="PS00475">
    <property type="entry name" value="RIBOSOMAL_L15"/>
    <property type="match status" value="1"/>
</dbReference>
<protein>
    <recommendedName>
        <fullName evidence="1">Large ribosomal subunit protein uL15</fullName>
    </recommendedName>
    <alternativeName>
        <fullName evidence="3">50S ribosomal protein L15</fullName>
    </alternativeName>
</protein>
<evidence type="ECO:0000255" key="1">
    <source>
        <dbReference type="HAMAP-Rule" id="MF_01341"/>
    </source>
</evidence>
<evidence type="ECO:0000256" key="2">
    <source>
        <dbReference type="SAM" id="MobiDB-lite"/>
    </source>
</evidence>
<evidence type="ECO:0000305" key="3"/>
<comment type="function">
    <text evidence="1">Binds to the 23S rRNA.</text>
</comment>
<comment type="subunit">
    <text evidence="1">Part of the 50S ribosomal subunit.</text>
</comment>
<comment type="similarity">
    <text evidence="1">Belongs to the universal ribosomal protein uL15 family.</text>
</comment>
<accession>Q8TRS5</accession>
<name>RL15_METAC</name>
<proteinExistence type="inferred from homology"/>
<gene>
    <name evidence="1" type="primary">rpl15</name>
    <name type="ordered locus">MA_1094</name>
</gene>
<sequence length="140" mass="15101">MDTKKFRGSRTCGGGTHKNRRGAGNRGGRGKAGGCKHHFVRAMMRGYSYGKHGFKRPDEVSRDVSIVNVGELDELASYLVEEGLAEVKDGAYHINLENLGIEKVLGSGRVTKNLVVTSEEFSASAREKIENAGGSCIDAE</sequence>
<organism>
    <name type="scientific">Methanosarcina acetivorans (strain ATCC 35395 / DSM 2834 / JCM 12185 / C2A)</name>
    <dbReference type="NCBI Taxonomy" id="188937"/>
    <lineage>
        <taxon>Archaea</taxon>
        <taxon>Methanobacteriati</taxon>
        <taxon>Methanobacteriota</taxon>
        <taxon>Stenosarchaea group</taxon>
        <taxon>Methanomicrobia</taxon>
        <taxon>Methanosarcinales</taxon>
        <taxon>Methanosarcinaceae</taxon>
        <taxon>Methanosarcina</taxon>
    </lineage>
</organism>
<feature type="chain" id="PRO_0000104866" description="Large ribosomal subunit protein uL15">
    <location>
        <begin position="1"/>
        <end position="140"/>
    </location>
</feature>
<feature type="region of interest" description="Disordered" evidence="2">
    <location>
        <begin position="1"/>
        <end position="32"/>
    </location>
</feature>